<name>TBP_DROME</name>
<proteinExistence type="evidence at protein level"/>
<gene>
    <name type="primary">Tbp</name>
    <name type="synonym">BTF1</name>
    <name type="synonym">TFIID</name>
    <name type="ORF">CG9874</name>
</gene>
<accession>P20227</accession>
<accession>Q9W2D8</accession>
<sequence length="353" mass="38451">MDQMLSPNFSIPSIGTPLHQMEADQQIVANPVYHPPAVSQPDSLMPAPGSSSVQHQQQQQQSDASGGSGLFGHEPSLPLAHKQMQSYQPSASYQQQQQQQQLQSQAPGGGGSTPQSMMQPQTPQSMMAHMMPMSERSVGGSGAGGGGDALSNIHQTMGPSTPMTPATPGSADPGIVPQLQNIVSTVNLCCKLDLKKIALHARNAEYNPKRFAAVIMRIREPRTTALIFSSGKMVCTGAKSEDDSRLAARKYARIIQKLGFPAKFLDFKIQNMVGSCDVKFPIRLEGLVLTHCNFSSYEPELFPGLIYRMVRPRIVLLIFVSGKVVLTGAKVRQEIYDAFDKIFPILKKFKKQS</sequence>
<dbReference type="EMBL" id="M38388">
    <property type="protein sequence ID" value="AAA28926.1"/>
    <property type="molecule type" value="mRNA"/>
</dbReference>
<dbReference type="EMBL" id="M38082">
    <property type="protein sequence ID" value="AAA28931.1"/>
    <property type="molecule type" value="mRNA"/>
</dbReference>
<dbReference type="EMBL" id="U11718">
    <property type="protein sequence ID" value="AAA68629.1"/>
    <property type="molecule type" value="Genomic_DNA"/>
</dbReference>
<dbReference type="EMBL" id="U35147">
    <property type="protein sequence ID" value="AAA79092.1"/>
    <property type="molecule type" value="Genomic_DNA"/>
</dbReference>
<dbReference type="EMBL" id="AE013599">
    <property type="protein sequence ID" value="AAF46754.1"/>
    <property type="molecule type" value="Genomic_DNA"/>
</dbReference>
<dbReference type="EMBL" id="AY069663">
    <property type="protein sequence ID" value="AAL39808.1"/>
    <property type="molecule type" value="mRNA"/>
</dbReference>
<dbReference type="PIR" id="A35615">
    <property type="entry name" value="A35615"/>
</dbReference>
<dbReference type="RefSeq" id="NP_523805.1">
    <property type="nucleotide sequence ID" value="NM_079081.4"/>
</dbReference>
<dbReference type="SMR" id="P20227"/>
<dbReference type="BioGRID" id="63101">
    <property type="interactions" value="37"/>
</dbReference>
<dbReference type="DIP" id="DIP-80N"/>
<dbReference type="FunCoup" id="P20227">
    <property type="interactions" value="2271"/>
</dbReference>
<dbReference type="IntAct" id="P20227">
    <property type="interactions" value="15"/>
</dbReference>
<dbReference type="STRING" id="7227.FBpp0071596"/>
<dbReference type="PaxDb" id="7227-FBpp0071596"/>
<dbReference type="DNASU" id="37476"/>
<dbReference type="EnsemblMetazoa" id="FBtr0071679">
    <property type="protein sequence ID" value="FBpp0071596"/>
    <property type="gene ID" value="FBgn0003687"/>
</dbReference>
<dbReference type="GeneID" id="37476"/>
<dbReference type="KEGG" id="dme:Dmel_CG9874"/>
<dbReference type="AGR" id="FB:FBgn0003687"/>
<dbReference type="CTD" id="6908"/>
<dbReference type="FlyBase" id="FBgn0003687">
    <property type="gene designation" value="Tbp"/>
</dbReference>
<dbReference type="VEuPathDB" id="VectorBase:FBgn0003687"/>
<dbReference type="eggNOG" id="KOG3302">
    <property type="taxonomic scope" value="Eukaryota"/>
</dbReference>
<dbReference type="GeneTree" id="ENSGT00940000167740"/>
<dbReference type="HOGENOM" id="CLU_060161_1_3_1"/>
<dbReference type="InParanoid" id="P20227"/>
<dbReference type="OMA" id="HMMPMSE"/>
<dbReference type="OrthoDB" id="2127950at2759"/>
<dbReference type="PhylomeDB" id="P20227"/>
<dbReference type="Reactome" id="R-DME-674695">
    <property type="pathway name" value="RNA Polymerase II Pre-transcription Events"/>
</dbReference>
<dbReference type="Reactome" id="R-DME-6804756">
    <property type="pathway name" value="Regulation of TP53 Activity through Phosphorylation"/>
</dbReference>
<dbReference type="Reactome" id="R-DME-6807505">
    <property type="pathway name" value="RNA polymerase II transcribes snRNA genes"/>
</dbReference>
<dbReference type="Reactome" id="R-DME-73772">
    <property type="pathway name" value="RNA Polymerase I Promoter Escape"/>
</dbReference>
<dbReference type="Reactome" id="R-DME-73776">
    <property type="pathway name" value="RNA Polymerase II Promoter Escape"/>
</dbReference>
<dbReference type="Reactome" id="R-DME-73779">
    <property type="pathway name" value="RNA Polymerase II Transcription Pre-Initiation And Promoter Opening"/>
</dbReference>
<dbReference type="Reactome" id="R-DME-75953">
    <property type="pathway name" value="RNA Polymerase II Transcription Initiation"/>
</dbReference>
<dbReference type="Reactome" id="R-DME-76042">
    <property type="pathway name" value="RNA Polymerase II Transcription Initiation And Promoter Clearance"/>
</dbReference>
<dbReference type="Reactome" id="R-DME-76061">
    <property type="pathway name" value="RNA Polymerase III Transcription Initiation From Type 1 Promoter"/>
</dbReference>
<dbReference type="Reactome" id="R-DME-76066">
    <property type="pathway name" value="RNA Polymerase III Transcription Initiation From Type 2 Promoter"/>
</dbReference>
<dbReference type="Reactome" id="R-DME-9018519">
    <property type="pathway name" value="Estrogen-dependent gene expression"/>
</dbReference>
<dbReference type="BioGRID-ORCS" id="37476">
    <property type="hits" value="0 hits in 3 CRISPR screens"/>
</dbReference>
<dbReference type="GenomeRNAi" id="37476"/>
<dbReference type="PRO" id="PR:P20227"/>
<dbReference type="Proteomes" id="UP000000803">
    <property type="component" value="Chromosome 2R"/>
</dbReference>
<dbReference type="Bgee" id="FBgn0003687">
    <property type="expression patterns" value="Expressed in egg cell and 56 other cell types or tissues"/>
</dbReference>
<dbReference type="GO" id="GO:0005634">
    <property type="term" value="C:nucleus"/>
    <property type="evidence" value="ECO:0000314"/>
    <property type="project" value="FlyBase"/>
</dbReference>
<dbReference type="GO" id="GO:0005669">
    <property type="term" value="C:transcription factor TFIID complex"/>
    <property type="evidence" value="ECO:0000353"/>
    <property type="project" value="FlyBase"/>
</dbReference>
<dbReference type="GO" id="GO:0000126">
    <property type="term" value="C:transcription factor TFIIIB complex"/>
    <property type="evidence" value="ECO:0000314"/>
    <property type="project" value="FlyBase"/>
</dbReference>
<dbReference type="GO" id="GO:0140296">
    <property type="term" value="F:general transcription initiation factor binding"/>
    <property type="evidence" value="ECO:0000353"/>
    <property type="project" value="FlyBase"/>
</dbReference>
<dbReference type="GO" id="GO:0000978">
    <property type="term" value="F:RNA polymerase II cis-regulatory region sequence-specific DNA binding"/>
    <property type="evidence" value="ECO:0000314"/>
    <property type="project" value="FlyBase"/>
</dbReference>
<dbReference type="GO" id="GO:0016251">
    <property type="term" value="F:RNA polymerase II general transcription initiation factor activity"/>
    <property type="evidence" value="ECO:0000314"/>
    <property type="project" value="BHF-UCL"/>
</dbReference>
<dbReference type="GO" id="GO:0001091">
    <property type="term" value="F:RNA polymerase II general transcription initiation factor binding"/>
    <property type="evidence" value="ECO:0000353"/>
    <property type="project" value="FlyBase"/>
</dbReference>
<dbReference type="GO" id="GO:0000995">
    <property type="term" value="F:RNA polymerase III general transcription initiation factor activity"/>
    <property type="evidence" value="ECO:0000250"/>
    <property type="project" value="UniProtKB"/>
</dbReference>
<dbReference type="GO" id="GO:0001006">
    <property type="term" value="F:RNA polymerase III type 3 promoter sequence-specific DNA binding"/>
    <property type="evidence" value="ECO:0000314"/>
    <property type="project" value="FlyBase"/>
</dbReference>
<dbReference type="GO" id="GO:0001092">
    <property type="term" value="F:TFIIA-class transcription factor complex binding"/>
    <property type="evidence" value="ECO:0000353"/>
    <property type="project" value="FlyBase"/>
</dbReference>
<dbReference type="GO" id="GO:0000976">
    <property type="term" value="F:transcription cis-regulatory region binding"/>
    <property type="evidence" value="ECO:0000314"/>
    <property type="project" value="BHF-UCL"/>
</dbReference>
<dbReference type="GO" id="GO:0006352">
    <property type="term" value="P:DNA-templated transcription initiation"/>
    <property type="evidence" value="ECO:0000314"/>
    <property type="project" value="BHF-UCL"/>
</dbReference>
<dbReference type="GO" id="GO:0042789">
    <property type="term" value="P:mRNA transcription by RNA polymerase II"/>
    <property type="evidence" value="ECO:0000314"/>
    <property type="project" value="FlyBase"/>
</dbReference>
<dbReference type="GO" id="GO:0051123">
    <property type="term" value="P:RNA polymerase II preinitiation complex assembly"/>
    <property type="evidence" value="ECO:0000314"/>
    <property type="project" value="BHF-UCL"/>
</dbReference>
<dbReference type="GO" id="GO:0042795">
    <property type="term" value="P:snRNA transcription by RNA polymerase II"/>
    <property type="evidence" value="ECO:0000314"/>
    <property type="project" value="FlyBase"/>
</dbReference>
<dbReference type="GO" id="GO:0042796">
    <property type="term" value="P:snRNA transcription by RNA polymerase III"/>
    <property type="evidence" value="ECO:0000314"/>
    <property type="project" value="FlyBase"/>
</dbReference>
<dbReference type="GO" id="GO:0006366">
    <property type="term" value="P:transcription by RNA polymerase II"/>
    <property type="evidence" value="ECO:0000315"/>
    <property type="project" value="FlyBase"/>
</dbReference>
<dbReference type="GO" id="GO:0006383">
    <property type="term" value="P:transcription by RNA polymerase III"/>
    <property type="evidence" value="ECO:0000314"/>
    <property type="project" value="FlyBase"/>
</dbReference>
<dbReference type="GO" id="GO:0006367">
    <property type="term" value="P:transcription initiation at RNA polymerase II promoter"/>
    <property type="evidence" value="ECO:0000314"/>
    <property type="project" value="FlyBase"/>
</dbReference>
<dbReference type="GO" id="GO:0042797">
    <property type="term" value="P:tRNA transcription by RNA polymerase III"/>
    <property type="evidence" value="ECO:0000314"/>
    <property type="project" value="FlyBase"/>
</dbReference>
<dbReference type="CDD" id="cd04516">
    <property type="entry name" value="TBP_eukaryotes"/>
    <property type="match status" value="1"/>
</dbReference>
<dbReference type="FunFam" id="3.30.310.10:FF:000001">
    <property type="entry name" value="TATA-box-binding protein 2"/>
    <property type="match status" value="1"/>
</dbReference>
<dbReference type="FunFam" id="3.30.310.10:FF:000002">
    <property type="entry name" value="TATA-box-binding protein 2"/>
    <property type="match status" value="1"/>
</dbReference>
<dbReference type="Gene3D" id="3.30.310.10">
    <property type="entry name" value="TATA-Binding Protein"/>
    <property type="match status" value="2"/>
</dbReference>
<dbReference type="HAMAP" id="MF_00408">
    <property type="entry name" value="TATA_bind_prot_arch"/>
    <property type="match status" value="1"/>
</dbReference>
<dbReference type="InterPro" id="IPR000814">
    <property type="entry name" value="TBP"/>
</dbReference>
<dbReference type="InterPro" id="IPR030491">
    <property type="entry name" value="TBP_CS"/>
</dbReference>
<dbReference type="InterPro" id="IPR012295">
    <property type="entry name" value="TBP_dom_sf"/>
</dbReference>
<dbReference type="InterPro" id="IPR033710">
    <property type="entry name" value="TBP_eukaryotic"/>
</dbReference>
<dbReference type="PANTHER" id="PTHR10126">
    <property type="entry name" value="TATA-BOX BINDING PROTEIN"/>
    <property type="match status" value="1"/>
</dbReference>
<dbReference type="Pfam" id="PF00352">
    <property type="entry name" value="TBP"/>
    <property type="match status" value="2"/>
</dbReference>
<dbReference type="PRINTS" id="PR00686">
    <property type="entry name" value="TIFACTORIID"/>
</dbReference>
<dbReference type="SUPFAM" id="SSF55945">
    <property type="entry name" value="TATA-box binding protein-like"/>
    <property type="match status" value="2"/>
</dbReference>
<dbReference type="PROSITE" id="PS00351">
    <property type="entry name" value="TFIID"/>
    <property type="match status" value="2"/>
</dbReference>
<protein>
    <recommendedName>
        <fullName>TATA-box-binding protein</fullName>
    </recommendedName>
    <alternativeName>
        <fullName>TATA sequence-binding protein</fullName>
    </alternativeName>
    <alternativeName>
        <fullName>TATA-binding factor</fullName>
    </alternativeName>
    <alternativeName>
        <fullName>TATA-box factor</fullName>
    </alternativeName>
    <alternativeName>
        <fullName>Transcription initiation factor TFIID TBP subunit</fullName>
    </alternativeName>
</protein>
<keyword id="KW-0238">DNA-binding</keyword>
<keyword id="KW-0539">Nucleus</keyword>
<keyword id="KW-1185">Reference proteome</keyword>
<keyword id="KW-0677">Repeat</keyword>
<keyword id="KW-0804">Transcription</keyword>
<reference key="1">
    <citation type="journal article" date="1990" name="Cell">
        <title>Isolation and characterization of the Drosophila gene encoding the TATA box binding protein, TFIID.</title>
        <authorList>
            <person name="Hoey T."/>
            <person name="Dynlacht B.D."/>
            <person name="Peterson M.G."/>
            <person name="Pugh B.F."/>
            <person name="Tjian R."/>
        </authorList>
    </citation>
    <scope>NUCLEOTIDE SEQUENCE [MRNA]</scope>
    <scope>FUNCTION</scope>
</reference>
<reference key="2">
    <citation type="journal article" date="1990" name="Proc. Natl. Acad. Sci. U.S.A.">
        <title>cDNA clone encoding Drosophila transcription factor TFIID.</title>
        <authorList>
            <person name="Muhich M."/>
            <person name="Iida C.T."/>
            <person name="Horikoshi M."/>
            <person name="Roeder R.G."/>
            <person name="Parker C.S."/>
        </authorList>
    </citation>
    <scope>NUCLEOTIDE SEQUENCE [MRNA]</scope>
    <scope>FUNCTION</scope>
</reference>
<reference key="3">
    <citation type="journal article" date="1995" name="Gene">
        <title>Structure of the genes encoding transcription factor IIB and TATA box-binding protein from Drosophila melanogaster.</title>
        <authorList>
            <person name="Lira-DeVito L.M."/>
            <person name="Burke T.W."/>
            <person name="Kadonaga J.T."/>
        </authorList>
    </citation>
    <scope>NUCLEOTIDE SEQUENCE [GENOMIC DNA]</scope>
</reference>
<reference key="4">
    <citation type="submission" date="1995-08" db="EMBL/GenBank/DDBJ databases">
        <title>Molecular characterization of the Drosophila gene encoding the TATA-box binding protein (TBP).</title>
        <authorList>
            <person name="Lee K."/>
            <person name="Oh Y."/>
            <person name="Yoon J."/>
            <person name="Cho N."/>
            <person name="Baek K."/>
        </authorList>
    </citation>
    <scope>NUCLEOTIDE SEQUENCE [GENOMIC DNA]</scope>
    <source>
        <strain>Oregon-R</strain>
    </source>
</reference>
<reference key="5">
    <citation type="journal article" date="2000" name="Science">
        <title>The genome sequence of Drosophila melanogaster.</title>
        <authorList>
            <person name="Adams M.D."/>
            <person name="Celniker S.E."/>
            <person name="Holt R.A."/>
            <person name="Evans C.A."/>
            <person name="Gocayne J.D."/>
            <person name="Amanatides P.G."/>
            <person name="Scherer S.E."/>
            <person name="Li P.W."/>
            <person name="Hoskins R.A."/>
            <person name="Galle R.F."/>
            <person name="George R.A."/>
            <person name="Lewis S.E."/>
            <person name="Richards S."/>
            <person name="Ashburner M."/>
            <person name="Henderson S.N."/>
            <person name="Sutton G.G."/>
            <person name="Wortman J.R."/>
            <person name="Yandell M.D."/>
            <person name="Zhang Q."/>
            <person name="Chen L.X."/>
            <person name="Brandon R.C."/>
            <person name="Rogers Y.-H.C."/>
            <person name="Blazej R.G."/>
            <person name="Champe M."/>
            <person name="Pfeiffer B.D."/>
            <person name="Wan K.H."/>
            <person name="Doyle C."/>
            <person name="Baxter E.G."/>
            <person name="Helt G."/>
            <person name="Nelson C.R."/>
            <person name="Miklos G.L.G."/>
            <person name="Abril J.F."/>
            <person name="Agbayani A."/>
            <person name="An H.-J."/>
            <person name="Andrews-Pfannkoch C."/>
            <person name="Baldwin D."/>
            <person name="Ballew R.M."/>
            <person name="Basu A."/>
            <person name="Baxendale J."/>
            <person name="Bayraktaroglu L."/>
            <person name="Beasley E.M."/>
            <person name="Beeson K.Y."/>
            <person name="Benos P.V."/>
            <person name="Berman B.P."/>
            <person name="Bhandari D."/>
            <person name="Bolshakov S."/>
            <person name="Borkova D."/>
            <person name="Botchan M.R."/>
            <person name="Bouck J."/>
            <person name="Brokstein P."/>
            <person name="Brottier P."/>
            <person name="Burtis K.C."/>
            <person name="Busam D.A."/>
            <person name="Butler H."/>
            <person name="Cadieu E."/>
            <person name="Center A."/>
            <person name="Chandra I."/>
            <person name="Cherry J.M."/>
            <person name="Cawley S."/>
            <person name="Dahlke C."/>
            <person name="Davenport L.B."/>
            <person name="Davies P."/>
            <person name="de Pablos B."/>
            <person name="Delcher A."/>
            <person name="Deng Z."/>
            <person name="Mays A.D."/>
            <person name="Dew I."/>
            <person name="Dietz S.M."/>
            <person name="Dodson K."/>
            <person name="Doup L.E."/>
            <person name="Downes M."/>
            <person name="Dugan-Rocha S."/>
            <person name="Dunkov B.C."/>
            <person name="Dunn P."/>
            <person name="Durbin K.J."/>
            <person name="Evangelista C.C."/>
            <person name="Ferraz C."/>
            <person name="Ferriera S."/>
            <person name="Fleischmann W."/>
            <person name="Fosler C."/>
            <person name="Gabrielian A.E."/>
            <person name="Garg N.S."/>
            <person name="Gelbart W.M."/>
            <person name="Glasser K."/>
            <person name="Glodek A."/>
            <person name="Gong F."/>
            <person name="Gorrell J.H."/>
            <person name="Gu Z."/>
            <person name="Guan P."/>
            <person name="Harris M."/>
            <person name="Harris N.L."/>
            <person name="Harvey D.A."/>
            <person name="Heiman T.J."/>
            <person name="Hernandez J.R."/>
            <person name="Houck J."/>
            <person name="Hostin D."/>
            <person name="Houston K.A."/>
            <person name="Howland T.J."/>
            <person name="Wei M.-H."/>
            <person name="Ibegwam C."/>
            <person name="Jalali M."/>
            <person name="Kalush F."/>
            <person name="Karpen G.H."/>
            <person name="Ke Z."/>
            <person name="Kennison J.A."/>
            <person name="Ketchum K.A."/>
            <person name="Kimmel B.E."/>
            <person name="Kodira C.D."/>
            <person name="Kraft C.L."/>
            <person name="Kravitz S."/>
            <person name="Kulp D."/>
            <person name="Lai Z."/>
            <person name="Lasko P."/>
            <person name="Lei Y."/>
            <person name="Levitsky A.A."/>
            <person name="Li J.H."/>
            <person name="Li Z."/>
            <person name="Liang Y."/>
            <person name="Lin X."/>
            <person name="Liu X."/>
            <person name="Mattei B."/>
            <person name="McIntosh T.C."/>
            <person name="McLeod M.P."/>
            <person name="McPherson D."/>
            <person name="Merkulov G."/>
            <person name="Milshina N.V."/>
            <person name="Mobarry C."/>
            <person name="Morris J."/>
            <person name="Moshrefi A."/>
            <person name="Mount S.M."/>
            <person name="Moy M."/>
            <person name="Murphy B."/>
            <person name="Murphy L."/>
            <person name="Muzny D.M."/>
            <person name="Nelson D.L."/>
            <person name="Nelson D.R."/>
            <person name="Nelson K.A."/>
            <person name="Nixon K."/>
            <person name="Nusskern D.R."/>
            <person name="Pacleb J.M."/>
            <person name="Palazzolo M."/>
            <person name="Pittman G.S."/>
            <person name="Pan S."/>
            <person name="Pollard J."/>
            <person name="Puri V."/>
            <person name="Reese M.G."/>
            <person name="Reinert K."/>
            <person name="Remington K."/>
            <person name="Saunders R.D.C."/>
            <person name="Scheeler F."/>
            <person name="Shen H."/>
            <person name="Shue B.C."/>
            <person name="Siden-Kiamos I."/>
            <person name="Simpson M."/>
            <person name="Skupski M.P."/>
            <person name="Smith T.J."/>
            <person name="Spier E."/>
            <person name="Spradling A.C."/>
            <person name="Stapleton M."/>
            <person name="Strong R."/>
            <person name="Sun E."/>
            <person name="Svirskas R."/>
            <person name="Tector C."/>
            <person name="Turner R."/>
            <person name="Venter E."/>
            <person name="Wang A.H."/>
            <person name="Wang X."/>
            <person name="Wang Z.-Y."/>
            <person name="Wassarman D.A."/>
            <person name="Weinstock G.M."/>
            <person name="Weissenbach J."/>
            <person name="Williams S.M."/>
            <person name="Woodage T."/>
            <person name="Worley K.C."/>
            <person name="Wu D."/>
            <person name="Yang S."/>
            <person name="Yao Q.A."/>
            <person name="Ye J."/>
            <person name="Yeh R.-F."/>
            <person name="Zaveri J.S."/>
            <person name="Zhan M."/>
            <person name="Zhang G."/>
            <person name="Zhao Q."/>
            <person name="Zheng L."/>
            <person name="Zheng X.H."/>
            <person name="Zhong F.N."/>
            <person name="Zhong W."/>
            <person name="Zhou X."/>
            <person name="Zhu S.C."/>
            <person name="Zhu X."/>
            <person name="Smith H.O."/>
            <person name="Gibbs R.A."/>
            <person name="Myers E.W."/>
            <person name="Rubin G.M."/>
            <person name="Venter J.C."/>
        </authorList>
    </citation>
    <scope>NUCLEOTIDE SEQUENCE [LARGE SCALE GENOMIC DNA]</scope>
    <source>
        <strain>Berkeley</strain>
    </source>
</reference>
<reference key="6">
    <citation type="journal article" date="2002" name="Genome Biol.">
        <title>Annotation of the Drosophila melanogaster euchromatic genome: a systematic review.</title>
        <authorList>
            <person name="Misra S."/>
            <person name="Crosby M.A."/>
            <person name="Mungall C.J."/>
            <person name="Matthews B.B."/>
            <person name="Campbell K.S."/>
            <person name="Hradecky P."/>
            <person name="Huang Y."/>
            <person name="Kaminker J.S."/>
            <person name="Millburn G.H."/>
            <person name="Prochnik S.E."/>
            <person name="Smith C.D."/>
            <person name="Tupy J.L."/>
            <person name="Whitfield E.J."/>
            <person name="Bayraktaroglu L."/>
            <person name="Berman B.P."/>
            <person name="Bettencourt B.R."/>
            <person name="Celniker S.E."/>
            <person name="de Grey A.D.N.J."/>
            <person name="Drysdale R.A."/>
            <person name="Harris N.L."/>
            <person name="Richter J."/>
            <person name="Russo S."/>
            <person name="Schroeder A.J."/>
            <person name="Shu S.Q."/>
            <person name="Stapleton M."/>
            <person name="Yamada C."/>
            <person name="Ashburner M."/>
            <person name="Gelbart W.M."/>
            <person name="Rubin G.M."/>
            <person name="Lewis S.E."/>
        </authorList>
    </citation>
    <scope>GENOME REANNOTATION</scope>
    <source>
        <strain>Berkeley</strain>
    </source>
</reference>
<reference key="7">
    <citation type="journal article" date="2002" name="Genome Biol.">
        <title>A Drosophila full-length cDNA resource.</title>
        <authorList>
            <person name="Stapleton M."/>
            <person name="Carlson J.W."/>
            <person name="Brokstein P."/>
            <person name="Yu C."/>
            <person name="Champe M."/>
            <person name="George R.A."/>
            <person name="Guarin H."/>
            <person name="Kronmiller B."/>
            <person name="Pacleb J.M."/>
            <person name="Park S."/>
            <person name="Wan K.H."/>
            <person name="Rubin G.M."/>
            <person name="Celniker S.E."/>
        </authorList>
    </citation>
    <scope>NUCLEOTIDE SEQUENCE [LARGE SCALE MRNA]</scope>
    <source>
        <strain>Berkeley</strain>
        <tissue>Embryo</tissue>
    </source>
</reference>
<reference key="8">
    <citation type="journal article" date="1993" name="Genes Dev.">
        <title>Drosophila TFIIA-L is processed into two subunits that are associated with the TBP/TAF complex.</title>
        <authorList>
            <person name="Yokomori K."/>
            <person name="Admon A."/>
            <person name="Goodrich J.A."/>
            <person name="Chen J.-L."/>
            <person name="Tjian R."/>
        </authorList>
    </citation>
    <scope>FUNCTION</scope>
    <scope>INTERACTION WITH TFIIA-L</scope>
    <source>
        <tissue>Embryo</tissue>
    </source>
</reference>
<reference key="9">
    <citation type="journal article" date="1993" name="Genes Dev.">
        <title>Molecular cloning and characterization of dTAFII30 alpha and dTAFII30 beta: two small subunits of Drosophila TFIID.</title>
        <authorList>
            <person name="Yokomori K."/>
            <person name="Chen J.L."/>
            <person name="Admon A."/>
            <person name="Zhou S."/>
            <person name="Tjian R."/>
        </authorList>
    </citation>
    <scope>INTERACTION WITH TAF12</scope>
</reference>
<reference key="10">
    <citation type="journal article" date="1993" name="Mol. Cell. Biol.">
        <title>Molecular cloning, expression, and characterization of the Drosophila 85-kilodalton TFIID subunit.</title>
        <authorList>
            <person name="Kokubo T."/>
            <person name="Gong D.-W."/>
            <person name="Yamashita S."/>
            <person name="Takada R."/>
            <person name="Roeder R.G."/>
            <person name="Horikoshi M."/>
            <person name="Nakatani Y."/>
        </authorList>
    </citation>
    <scope>INTERACTION WITH TAF5</scope>
    <source>
        <tissue>Embryo</tissue>
    </source>
</reference>
<reference key="11">
    <citation type="journal article" date="1993" name="Nature">
        <title>Largest subunit of Drosophila transcription factor IID directs assembly of a complex containing TBP and a coactivator.</title>
        <authorList>
            <person name="Weinzierl R.O."/>
            <person name="Dynlacht B.D."/>
            <person name="Tjian R."/>
        </authorList>
    </citation>
    <scope>INTERACTION WITH TAF1</scope>
</reference>
<reference key="12">
    <citation type="journal article" date="1994" name="Science">
        <title>Drosophila TAFII150: similarity to yeast gene TSM-1 and specific binding to core promoter DNA.</title>
        <authorList>
            <person name="Verrijzer C.P."/>
            <person name="Yokomori K."/>
            <person name="Chen J.-L."/>
            <person name="Tjian R."/>
        </authorList>
    </citation>
    <scope>INTERACTION WITH TAF2</scope>
    <source>
        <tissue>Embryo</tissue>
    </source>
</reference>
<comment type="function">
    <text evidence="3 4 6">General transcription factor that functions at the core of the DNA-binding multiprotein factor TFIID. Binding of TFIID to the TATA box is the initial transcriptional step of the pre-initiation complex (PIC), playing a role in the activation of eukaryotic genes transcribed by RNA polymerase II.</text>
</comment>
<comment type="subunit">
    <text evidence="5 6 7 8 9">Belongs to the TFIID complex which is composed of TATA binding protein (Tbp) and a number of TBP-associated factors (Tafs). Binds DNA as monomer. Interacts with TFIIA-L heterotrimer. Interacts with Taf1, Taf2, Taf5 and Taf12.</text>
</comment>
<comment type="interaction">
    <interactant intactId="EBI-169179">
        <id>P20227</id>
    </interactant>
    <interactant intactId="EBI-235994">
        <id>P40791</id>
        <label>Mef2</label>
    </interactant>
    <organismsDiffer>false</organismsDiffer>
    <experiments>2</experiments>
</comment>
<comment type="interaction">
    <interactant intactId="EBI-169179">
        <id>P20227</id>
    </interactant>
    <interactant intactId="EBI-499582">
        <id>P51123</id>
        <label>Taf1</label>
    </interactant>
    <organismsDiffer>false</organismsDiffer>
    <experiments>3</experiments>
</comment>
<comment type="subcellular location">
    <subcellularLocation>
        <location evidence="1">Nucleus</location>
    </subcellularLocation>
</comment>
<comment type="similarity">
    <text evidence="10">Belongs to the TBP family.</text>
</comment>
<organism>
    <name type="scientific">Drosophila melanogaster</name>
    <name type="common">Fruit fly</name>
    <dbReference type="NCBI Taxonomy" id="7227"/>
    <lineage>
        <taxon>Eukaryota</taxon>
        <taxon>Metazoa</taxon>
        <taxon>Ecdysozoa</taxon>
        <taxon>Arthropoda</taxon>
        <taxon>Hexapoda</taxon>
        <taxon>Insecta</taxon>
        <taxon>Pterygota</taxon>
        <taxon>Neoptera</taxon>
        <taxon>Endopterygota</taxon>
        <taxon>Diptera</taxon>
        <taxon>Brachycera</taxon>
        <taxon>Muscomorpha</taxon>
        <taxon>Ephydroidea</taxon>
        <taxon>Drosophilidae</taxon>
        <taxon>Drosophila</taxon>
        <taxon>Sophophora</taxon>
    </lineage>
</organism>
<evidence type="ECO:0000250" key="1">
    <source>
        <dbReference type="UniProtKB" id="P20226"/>
    </source>
</evidence>
<evidence type="ECO:0000256" key="2">
    <source>
        <dbReference type="SAM" id="MobiDB-lite"/>
    </source>
</evidence>
<evidence type="ECO:0000269" key="3">
    <source>
    </source>
</evidence>
<evidence type="ECO:0000269" key="4">
    <source>
    </source>
</evidence>
<evidence type="ECO:0000269" key="5">
    <source>
    </source>
</evidence>
<evidence type="ECO:0000269" key="6">
    <source>
    </source>
</evidence>
<evidence type="ECO:0000269" key="7">
    <source>
    </source>
</evidence>
<evidence type="ECO:0000269" key="8">
    <source>
    </source>
</evidence>
<evidence type="ECO:0000269" key="9">
    <source>
    </source>
</evidence>
<evidence type="ECO:0000305" key="10"/>
<feature type="chain" id="PRO_0000153964" description="TATA-box-binding protein">
    <location>
        <begin position="1"/>
        <end position="353"/>
    </location>
</feature>
<feature type="repeat" description="1">
    <location>
        <begin position="179"/>
        <end position="255"/>
    </location>
</feature>
<feature type="repeat" description="2">
    <location>
        <begin position="269"/>
        <end position="346"/>
    </location>
</feature>
<feature type="region of interest" description="Disordered" evidence="2">
    <location>
        <begin position="20"/>
        <end position="121"/>
    </location>
</feature>
<feature type="compositionally biased region" description="Low complexity" evidence="2">
    <location>
        <begin position="49"/>
        <end position="65"/>
    </location>
</feature>
<feature type="compositionally biased region" description="Low complexity" evidence="2">
    <location>
        <begin position="85"/>
        <end position="106"/>
    </location>
</feature>
<feature type="sequence conflict" description="In Ref. 4." evidence="10" ref="4">
    <original>Q</original>
    <variation>QQ</variation>
    <location>
        <position position="101"/>
    </location>
</feature>
<feature type="sequence conflict" description="In Ref. 4; AAA79092." evidence="10" ref="4">
    <original>G</original>
    <variation>A</variation>
    <location>
        <position position="146"/>
    </location>
</feature>